<reference key="1">
    <citation type="submission" date="2007-03" db="EMBL/GenBank/DDBJ databases">
        <authorList>
            <person name="Heidelberg J."/>
        </authorList>
    </citation>
    <scope>NUCLEOTIDE SEQUENCE [LARGE SCALE GENOMIC DNA]</scope>
    <source>
        <strain>ATCC 39541 / Classical Ogawa 395 / O395</strain>
    </source>
</reference>
<reference key="2">
    <citation type="journal article" date="2008" name="PLoS ONE">
        <title>A recalibrated molecular clock and independent origins for the cholera pandemic clones.</title>
        <authorList>
            <person name="Feng L."/>
            <person name="Reeves P.R."/>
            <person name="Lan R."/>
            <person name="Ren Y."/>
            <person name="Gao C."/>
            <person name="Zhou Z."/>
            <person name="Ren Y."/>
            <person name="Cheng J."/>
            <person name="Wang W."/>
            <person name="Wang J."/>
            <person name="Qian W."/>
            <person name="Li D."/>
            <person name="Wang L."/>
        </authorList>
    </citation>
    <scope>NUCLEOTIDE SEQUENCE [LARGE SCALE GENOMIC DNA]</scope>
    <source>
        <strain>ATCC 39541 / Classical Ogawa 395 / O395</strain>
    </source>
</reference>
<feature type="chain" id="PRO_1000073265" description="Large ribosomal subunit protein uL24">
    <location>
        <begin position="1"/>
        <end position="105"/>
    </location>
</feature>
<evidence type="ECO:0000255" key="1">
    <source>
        <dbReference type="HAMAP-Rule" id="MF_01326"/>
    </source>
</evidence>
<evidence type="ECO:0000305" key="2"/>
<keyword id="KW-0687">Ribonucleoprotein</keyword>
<keyword id="KW-0689">Ribosomal protein</keyword>
<keyword id="KW-0694">RNA-binding</keyword>
<keyword id="KW-0699">rRNA-binding</keyword>
<comment type="function">
    <text evidence="1">One of two assembly initiator proteins, it binds directly to the 5'-end of the 23S rRNA, where it nucleates assembly of the 50S subunit.</text>
</comment>
<comment type="function">
    <text evidence="1">One of the proteins that surrounds the polypeptide exit tunnel on the outside of the subunit.</text>
</comment>
<comment type="subunit">
    <text evidence="1">Part of the 50S ribosomal subunit.</text>
</comment>
<comment type="similarity">
    <text evidence="1">Belongs to the universal ribosomal protein uL24 family.</text>
</comment>
<sequence>MAAKIRQNDEVIVLAGKDKGKKGKVTKVLATGKVIVEGINLVKKHQKPVPAMGVQGGIVEQEAAIDVSNIAIFNAKTGKADRIGFRFEDGKKVRFFKSNNEIVSN</sequence>
<gene>
    <name evidence="1" type="primary">rplX</name>
    <name type="ordered locus">VC0395_A2163</name>
    <name type="ordered locus">VC395_2698</name>
</gene>
<name>RL24_VIBC3</name>
<accession>A5F555</accession>
<accession>C3LXI4</accession>
<protein>
    <recommendedName>
        <fullName evidence="1">Large ribosomal subunit protein uL24</fullName>
    </recommendedName>
    <alternativeName>
        <fullName evidence="2">50S ribosomal protein L24</fullName>
    </alternativeName>
</protein>
<proteinExistence type="inferred from homology"/>
<dbReference type="EMBL" id="CP000627">
    <property type="protein sequence ID" value="ABQ21604.1"/>
    <property type="molecule type" value="Genomic_DNA"/>
</dbReference>
<dbReference type="EMBL" id="CP001235">
    <property type="protein sequence ID" value="ACP10684.1"/>
    <property type="molecule type" value="Genomic_DNA"/>
</dbReference>
<dbReference type="RefSeq" id="WP_000729178.1">
    <property type="nucleotide sequence ID" value="NZ_JAACZH010000007.1"/>
</dbReference>
<dbReference type="SMR" id="A5F555"/>
<dbReference type="GeneID" id="88785144"/>
<dbReference type="KEGG" id="vco:VC0395_A2163"/>
<dbReference type="KEGG" id="vcr:VC395_2698"/>
<dbReference type="PATRIC" id="fig|345073.21.peg.2598"/>
<dbReference type="eggNOG" id="COG0198">
    <property type="taxonomic scope" value="Bacteria"/>
</dbReference>
<dbReference type="HOGENOM" id="CLU_093315_2_2_6"/>
<dbReference type="OrthoDB" id="9807419at2"/>
<dbReference type="Proteomes" id="UP000000249">
    <property type="component" value="Chromosome 2"/>
</dbReference>
<dbReference type="GO" id="GO:1990904">
    <property type="term" value="C:ribonucleoprotein complex"/>
    <property type="evidence" value="ECO:0007669"/>
    <property type="project" value="UniProtKB-KW"/>
</dbReference>
<dbReference type="GO" id="GO:0005840">
    <property type="term" value="C:ribosome"/>
    <property type="evidence" value="ECO:0007669"/>
    <property type="project" value="UniProtKB-KW"/>
</dbReference>
<dbReference type="GO" id="GO:0019843">
    <property type="term" value="F:rRNA binding"/>
    <property type="evidence" value="ECO:0007669"/>
    <property type="project" value="UniProtKB-UniRule"/>
</dbReference>
<dbReference type="GO" id="GO:0003735">
    <property type="term" value="F:structural constituent of ribosome"/>
    <property type="evidence" value="ECO:0007669"/>
    <property type="project" value="InterPro"/>
</dbReference>
<dbReference type="GO" id="GO:0006412">
    <property type="term" value="P:translation"/>
    <property type="evidence" value="ECO:0007669"/>
    <property type="project" value="UniProtKB-UniRule"/>
</dbReference>
<dbReference type="CDD" id="cd06089">
    <property type="entry name" value="KOW_RPL26"/>
    <property type="match status" value="1"/>
</dbReference>
<dbReference type="FunFam" id="2.30.30.30:FF:000004">
    <property type="entry name" value="50S ribosomal protein L24"/>
    <property type="match status" value="1"/>
</dbReference>
<dbReference type="Gene3D" id="2.30.30.30">
    <property type="match status" value="1"/>
</dbReference>
<dbReference type="HAMAP" id="MF_01326_B">
    <property type="entry name" value="Ribosomal_uL24_B"/>
    <property type="match status" value="1"/>
</dbReference>
<dbReference type="InterPro" id="IPR005824">
    <property type="entry name" value="KOW"/>
</dbReference>
<dbReference type="InterPro" id="IPR014722">
    <property type="entry name" value="Rib_uL2_dom2"/>
</dbReference>
<dbReference type="InterPro" id="IPR003256">
    <property type="entry name" value="Ribosomal_uL24"/>
</dbReference>
<dbReference type="InterPro" id="IPR005825">
    <property type="entry name" value="Ribosomal_uL24_CS"/>
</dbReference>
<dbReference type="InterPro" id="IPR041988">
    <property type="entry name" value="Ribosomal_uL24_KOW"/>
</dbReference>
<dbReference type="InterPro" id="IPR008991">
    <property type="entry name" value="Translation_prot_SH3-like_sf"/>
</dbReference>
<dbReference type="NCBIfam" id="TIGR01079">
    <property type="entry name" value="rplX_bact"/>
    <property type="match status" value="1"/>
</dbReference>
<dbReference type="PANTHER" id="PTHR12903">
    <property type="entry name" value="MITOCHONDRIAL RIBOSOMAL PROTEIN L24"/>
    <property type="match status" value="1"/>
</dbReference>
<dbReference type="Pfam" id="PF00467">
    <property type="entry name" value="KOW"/>
    <property type="match status" value="1"/>
</dbReference>
<dbReference type="Pfam" id="PF17136">
    <property type="entry name" value="ribosomal_L24"/>
    <property type="match status" value="1"/>
</dbReference>
<dbReference type="SMART" id="SM00739">
    <property type="entry name" value="KOW"/>
    <property type="match status" value="1"/>
</dbReference>
<dbReference type="SUPFAM" id="SSF50104">
    <property type="entry name" value="Translation proteins SH3-like domain"/>
    <property type="match status" value="1"/>
</dbReference>
<dbReference type="PROSITE" id="PS01108">
    <property type="entry name" value="RIBOSOMAL_L24"/>
    <property type="match status" value="1"/>
</dbReference>
<organism>
    <name type="scientific">Vibrio cholerae serotype O1 (strain ATCC 39541 / Classical Ogawa 395 / O395)</name>
    <dbReference type="NCBI Taxonomy" id="345073"/>
    <lineage>
        <taxon>Bacteria</taxon>
        <taxon>Pseudomonadati</taxon>
        <taxon>Pseudomonadota</taxon>
        <taxon>Gammaproteobacteria</taxon>
        <taxon>Vibrionales</taxon>
        <taxon>Vibrionaceae</taxon>
        <taxon>Vibrio</taxon>
    </lineage>
</organism>